<feature type="propeptide" id="PRO_0000031137" evidence="1">
    <location>
        <begin position="1"/>
        <end position="2"/>
    </location>
</feature>
<feature type="chain" id="PRO_0000031138" description="Ribulose bisphosphate carboxylase large chain">
    <location>
        <begin position="3"/>
        <end position="475"/>
    </location>
</feature>
<feature type="active site" description="Proton acceptor" evidence="1">
    <location>
        <position position="175"/>
    </location>
</feature>
<feature type="active site" description="Proton acceptor" evidence="1">
    <location>
        <position position="294"/>
    </location>
</feature>
<feature type="binding site" description="in homodimeric partner" evidence="1">
    <location>
        <position position="123"/>
    </location>
    <ligand>
        <name>substrate</name>
    </ligand>
</feature>
<feature type="binding site" evidence="1">
    <location>
        <position position="173"/>
    </location>
    <ligand>
        <name>substrate</name>
    </ligand>
</feature>
<feature type="binding site" evidence="1">
    <location>
        <position position="177"/>
    </location>
    <ligand>
        <name>substrate</name>
    </ligand>
</feature>
<feature type="binding site" description="via carbamate group" evidence="1">
    <location>
        <position position="201"/>
    </location>
    <ligand>
        <name>Mg(2+)</name>
        <dbReference type="ChEBI" id="CHEBI:18420"/>
    </ligand>
</feature>
<feature type="binding site" evidence="1">
    <location>
        <position position="203"/>
    </location>
    <ligand>
        <name>Mg(2+)</name>
        <dbReference type="ChEBI" id="CHEBI:18420"/>
    </ligand>
</feature>
<feature type="binding site" evidence="1">
    <location>
        <position position="204"/>
    </location>
    <ligand>
        <name>Mg(2+)</name>
        <dbReference type="ChEBI" id="CHEBI:18420"/>
    </ligand>
</feature>
<feature type="binding site" evidence="1">
    <location>
        <position position="295"/>
    </location>
    <ligand>
        <name>substrate</name>
    </ligand>
</feature>
<feature type="binding site" evidence="1">
    <location>
        <position position="327"/>
    </location>
    <ligand>
        <name>substrate</name>
    </ligand>
</feature>
<feature type="binding site" evidence="1">
    <location>
        <position position="379"/>
    </location>
    <ligand>
        <name>substrate</name>
    </ligand>
</feature>
<feature type="site" description="Transition state stabilizer" evidence="1">
    <location>
        <position position="334"/>
    </location>
</feature>
<feature type="modified residue" description="N-acetylproline" evidence="1">
    <location>
        <position position="3"/>
    </location>
</feature>
<feature type="modified residue" description="N6,N6,N6-trimethyllysine" evidence="1">
    <location>
        <position position="14"/>
    </location>
</feature>
<feature type="modified residue" description="N6-carboxylysine" evidence="1">
    <location>
        <position position="201"/>
    </location>
</feature>
<gene>
    <name evidence="1" type="primary">rbcL</name>
</gene>
<keyword id="KW-0007">Acetylation</keyword>
<keyword id="KW-0113">Calvin cycle</keyword>
<keyword id="KW-0120">Carbon dioxide fixation</keyword>
<keyword id="KW-0150">Chloroplast</keyword>
<keyword id="KW-0456">Lyase</keyword>
<keyword id="KW-0460">Magnesium</keyword>
<keyword id="KW-0479">Metal-binding</keyword>
<keyword id="KW-0488">Methylation</keyword>
<keyword id="KW-0503">Monooxygenase</keyword>
<keyword id="KW-0560">Oxidoreductase</keyword>
<keyword id="KW-0601">Photorespiration</keyword>
<keyword id="KW-0602">Photosynthesis</keyword>
<keyword id="KW-0934">Plastid</keyword>
<organism>
    <name type="scientific">Bazzania trilobata</name>
    <name type="common">Greater whipwort</name>
    <name type="synonym">Jungermannia trilobata</name>
    <dbReference type="NCBI Taxonomy" id="13808"/>
    <lineage>
        <taxon>Eukaryota</taxon>
        <taxon>Viridiplantae</taxon>
        <taxon>Streptophyta</taxon>
        <taxon>Embryophyta</taxon>
        <taxon>Marchantiophyta</taxon>
        <taxon>Jungermanniopsida</taxon>
        <taxon>Jungermanniidae</taxon>
        <taxon>Jungermanniales</taxon>
        <taxon>Lophocoleineae</taxon>
        <taxon>Lepidoziaceae</taxon>
        <taxon>Bazzanioideae</taxon>
        <taxon>Bazzania</taxon>
    </lineage>
</organism>
<evidence type="ECO:0000255" key="1">
    <source>
        <dbReference type="HAMAP-Rule" id="MF_01338"/>
    </source>
</evidence>
<protein>
    <recommendedName>
        <fullName evidence="1">Ribulose bisphosphate carboxylase large chain</fullName>
        <shortName evidence="1">RuBisCO large subunit</shortName>
        <ecNumber evidence="1">4.1.1.39</ecNumber>
    </recommendedName>
</protein>
<accession>P48685</accession>
<proteinExistence type="inferred from homology"/>
<dbReference type="EC" id="4.1.1.39" evidence="1"/>
<dbReference type="EMBL" id="L11056">
    <property type="protein sequence ID" value="AAA57238.1"/>
    <property type="molecule type" value="Genomic_DNA"/>
</dbReference>
<dbReference type="SMR" id="P48685"/>
<dbReference type="GO" id="GO:0009507">
    <property type="term" value="C:chloroplast"/>
    <property type="evidence" value="ECO:0007669"/>
    <property type="project" value="UniProtKB-SubCell"/>
</dbReference>
<dbReference type="GO" id="GO:0000287">
    <property type="term" value="F:magnesium ion binding"/>
    <property type="evidence" value="ECO:0007669"/>
    <property type="project" value="UniProtKB-UniRule"/>
</dbReference>
<dbReference type="GO" id="GO:0004497">
    <property type="term" value="F:monooxygenase activity"/>
    <property type="evidence" value="ECO:0007669"/>
    <property type="project" value="UniProtKB-KW"/>
</dbReference>
<dbReference type="GO" id="GO:0016984">
    <property type="term" value="F:ribulose-bisphosphate carboxylase activity"/>
    <property type="evidence" value="ECO:0007669"/>
    <property type="project" value="UniProtKB-UniRule"/>
</dbReference>
<dbReference type="GO" id="GO:0009853">
    <property type="term" value="P:photorespiration"/>
    <property type="evidence" value="ECO:0007669"/>
    <property type="project" value="UniProtKB-KW"/>
</dbReference>
<dbReference type="GO" id="GO:0019253">
    <property type="term" value="P:reductive pentose-phosphate cycle"/>
    <property type="evidence" value="ECO:0007669"/>
    <property type="project" value="UniProtKB-UniRule"/>
</dbReference>
<dbReference type="CDD" id="cd08212">
    <property type="entry name" value="RuBisCO_large_I"/>
    <property type="match status" value="1"/>
</dbReference>
<dbReference type="FunFam" id="3.20.20.110:FF:000001">
    <property type="entry name" value="Ribulose bisphosphate carboxylase large chain"/>
    <property type="match status" value="1"/>
</dbReference>
<dbReference type="FunFam" id="3.30.70.150:FF:000001">
    <property type="entry name" value="Ribulose bisphosphate carboxylase large chain"/>
    <property type="match status" value="1"/>
</dbReference>
<dbReference type="Gene3D" id="3.20.20.110">
    <property type="entry name" value="Ribulose bisphosphate carboxylase, large subunit, C-terminal domain"/>
    <property type="match status" value="1"/>
</dbReference>
<dbReference type="Gene3D" id="3.30.70.150">
    <property type="entry name" value="RuBisCO large subunit, N-terminal domain"/>
    <property type="match status" value="1"/>
</dbReference>
<dbReference type="HAMAP" id="MF_01338">
    <property type="entry name" value="RuBisCO_L_type1"/>
    <property type="match status" value="1"/>
</dbReference>
<dbReference type="InterPro" id="IPR033966">
    <property type="entry name" value="RuBisCO"/>
</dbReference>
<dbReference type="InterPro" id="IPR020878">
    <property type="entry name" value="RuBisCo_large_chain_AS"/>
</dbReference>
<dbReference type="InterPro" id="IPR000685">
    <property type="entry name" value="RuBisCO_lsu_C"/>
</dbReference>
<dbReference type="InterPro" id="IPR036376">
    <property type="entry name" value="RuBisCO_lsu_C_sf"/>
</dbReference>
<dbReference type="InterPro" id="IPR017443">
    <property type="entry name" value="RuBisCO_lsu_fd_N"/>
</dbReference>
<dbReference type="InterPro" id="IPR036422">
    <property type="entry name" value="RuBisCO_lsu_N_sf"/>
</dbReference>
<dbReference type="InterPro" id="IPR020888">
    <property type="entry name" value="RuBisCO_lsuI"/>
</dbReference>
<dbReference type="NCBIfam" id="NF003252">
    <property type="entry name" value="PRK04208.1"/>
    <property type="match status" value="1"/>
</dbReference>
<dbReference type="PANTHER" id="PTHR42704">
    <property type="entry name" value="RIBULOSE BISPHOSPHATE CARBOXYLASE"/>
    <property type="match status" value="1"/>
</dbReference>
<dbReference type="PANTHER" id="PTHR42704:SF17">
    <property type="entry name" value="RIBULOSE BISPHOSPHATE CARBOXYLASE LARGE CHAIN"/>
    <property type="match status" value="1"/>
</dbReference>
<dbReference type="Pfam" id="PF00016">
    <property type="entry name" value="RuBisCO_large"/>
    <property type="match status" value="1"/>
</dbReference>
<dbReference type="Pfam" id="PF02788">
    <property type="entry name" value="RuBisCO_large_N"/>
    <property type="match status" value="1"/>
</dbReference>
<dbReference type="SFLD" id="SFLDG01052">
    <property type="entry name" value="RuBisCO"/>
    <property type="match status" value="1"/>
</dbReference>
<dbReference type="SFLD" id="SFLDS00014">
    <property type="entry name" value="RuBisCO"/>
    <property type="match status" value="1"/>
</dbReference>
<dbReference type="SFLD" id="SFLDG00301">
    <property type="entry name" value="RuBisCO-like_proteins"/>
    <property type="match status" value="1"/>
</dbReference>
<dbReference type="SUPFAM" id="SSF51649">
    <property type="entry name" value="RuBisCo, C-terminal domain"/>
    <property type="match status" value="1"/>
</dbReference>
<dbReference type="SUPFAM" id="SSF54966">
    <property type="entry name" value="RuBisCO, large subunit, small (N-terminal) domain"/>
    <property type="match status" value="1"/>
</dbReference>
<dbReference type="PROSITE" id="PS00157">
    <property type="entry name" value="RUBISCO_LARGE"/>
    <property type="match status" value="1"/>
</dbReference>
<sequence length="475" mass="52530">MSPQTETKTGVGFKAGVKDYRLTYYTPEYETKETDILAAFRMTPQPGVPPEEAGAAVAAESSTGTWTTVWTDGLTSLDRYKGRCYDIEPVAGEENQYIAYVAHPLDLFEEGSVTNLFTSIVGNVFGFKASRALRLEDLRIPPSYVKTFQGPPHGIQVERDKLNKYGRPLLGCTIKPKLGLSAKNYGRAVYECLRGGLDFTKDDENVNSQPFMRWRDRFLFVAEALFKSQAETGEIKGHYLNATAGTSEEMMKRAACARELGVPIVMHDYLTGGFTANTSLAHHCRDNGLLLHIHRAMHAVIDRQKNHGMHFRVSAKALRLSGGDHIHAGTVVGKLEGERDVTLGFVDLLRDDYIEKDRSRGVYFTQDWVSLPGVLPVASGGIHVWHMPALTEIFGDDSVLQFGGGTLGHPWGNAPGAVANRVASEACVQARNEGRDLAREGNEIIREAAKWSPDLAAACEVWKEIKFEYETMNTL</sequence>
<reference key="1">
    <citation type="journal article" date="1994" name="Mol. Phylogenet. Evol.">
        <title>Phylogenetic analysis of green plant rbcL sequences.</title>
        <authorList>
            <person name="Manhart J.R."/>
        </authorList>
    </citation>
    <scope>NUCLEOTIDE SEQUENCE [GENOMIC DNA]</scope>
</reference>
<geneLocation type="chloroplast"/>
<comment type="function">
    <text evidence="1">RuBisCO catalyzes two reactions: the carboxylation of D-ribulose 1,5-bisphosphate, the primary event in carbon dioxide fixation, as well as the oxidative fragmentation of the pentose substrate in the photorespiration process. Both reactions occur simultaneously and in competition at the same active site.</text>
</comment>
<comment type="catalytic activity">
    <reaction evidence="1">
        <text>2 (2R)-3-phosphoglycerate + 2 H(+) = D-ribulose 1,5-bisphosphate + CO2 + H2O</text>
        <dbReference type="Rhea" id="RHEA:23124"/>
        <dbReference type="ChEBI" id="CHEBI:15377"/>
        <dbReference type="ChEBI" id="CHEBI:15378"/>
        <dbReference type="ChEBI" id="CHEBI:16526"/>
        <dbReference type="ChEBI" id="CHEBI:57870"/>
        <dbReference type="ChEBI" id="CHEBI:58272"/>
        <dbReference type="EC" id="4.1.1.39"/>
    </reaction>
</comment>
<comment type="catalytic activity">
    <reaction evidence="1">
        <text>D-ribulose 1,5-bisphosphate + O2 = 2-phosphoglycolate + (2R)-3-phosphoglycerate + 2 H(+)</text>
        <dbReference type="Rhea" id="RHEA:36631"/>
        <dbReference type="ChEBI" id="CHEBI:15378"/>
        <dbReference type="ChEBI" id="CHEBI:15379"/>
        <dbReference type="ChEBI" id="CHEBI:57870"/>
        <dbReference type="ChEBI" id="CHEBI:58033"/>
        <dbReference type="ChEBI" id="CHEBI:58272"/>
    </reaction>
</comment>
<comment type="cofactor">
    <cofactor evidence="1">
        <name>Mg(2+)</name>
        <dbReference type="ChEBI" id="CHEBI:18420"/>
    </cofactor>
    <text evidence="1">Binds 1 Mg(2+) ion per subunit.</text>
</comment>
<comment type="subunit">
    <text evidence="1">Heterohexadecamer of 8 large chains and 8 small chains.</text>
</comment>
<comment type="subcellular location">
    <subcellularLocation>
        <location>Plastid</location>
        <location>Chloroplast</location>
    </subcellularLocation>
</comment>
<comment type="miscellaneous">
    <text evidence="1">The basic functional RuBisCO is composed of a large chain homodimer in a 'head-to-tail' conformation. In form I RuBisCO this homodimer is arranged in a barrel-like tetramer with the small subunits forming a tetrameric 'cap' on each end of the 'barrel'.</text>
</comment>
<comment type="similarity">
    <text evidence="1">Belongs to the RuBisCO large chain family. Type I subfamily.</text>
</comment>
<name>RBL_BAZTR</name>